<accession>A6SZN7</accession>
<organism>
    <name type="scientific">Janthinobacterium sp. (strain Marseille)</name>
    <name type="common">Minibacterium massiliensis</name>
    <dbReference type="NCBI Taxonomy" id="375286"/>
    <lineage>
        <taxon>Bacteria</taxon>
        <taxon>Pseudomonadati</taxon>
        <taxon>Pseudomonadota</taxon>
        <taxon>Betaproteobacteria</taxon>
        <taxon>Burkholderiales</taxon>
        <taxon>Oxalobacteraceae</taxon>
        <taxon>Janthinobacterium</taxon>
    </lineage>
</organism>
<proteinExistence type="inferred from homology"/>
<name>RNH2_JANMA</name>
<dbReference type="EC" id="3.1.26.4" evidence="1"/>
<dbReference type="EMBL" id="CP000269">
    <property type="protein sequence ID" value="ABR89222.1"/>
    <property type="molecule type" value="Genomic_DNA"/>
</dbReference>
<dbReference type="RefSeq" id="WP_012079897.1">
    <property type="nucleotide sequence ID" value="NC_009659.1"/>
</dbReference>
<dbReference type="SMR" id="A6SZN7"/>
<dbReference type="STRING" id="375286.mma_2044"/>
<dbReference type="KEGG" id="mms:mma_2044"/>
<dbReference type="eggNOG" id="COG0164">
    <property type="taxonomic scope" value="Bacteria"/>
</dbReference>
<dbReference type="HOGENOM" id="CLU_036532_3_2_4"/>
<dbReference type="OrthoDB" id="9803420at2"/>
<dbReference type="Proteomes" id="UP000006388">
    <property type="component" value="Chromosome"/>
</dbReference>
<dbReference type="GO" id="GO:0005737">
    <property type="term" value="C:cytoplasm"/>
    <property type="evidence" value="ECO:0007669"/>
    <property type="project" value="UniProtKB-SubCell"/>
</dbReference>
<dbReference type="GO" id="GO:0032299">
    <property type="term" value="C:ribonuclease H2 complex"/>
    <property type="evidence" value="ECO:0007669"/>
    <property type="project" value="TreeGrafter"/>
</dbReference>
<dbReference type="GO" id="GO:0030145">
    <property type="term" value="F:manganese ion binding"/>
    <property type="evidence" value="ECO:0007669"/>
    <property type="project" value="UniProtKB-UniRule"/>
</dbReference>
<dbReference type="GO" id="GO:0003723">
    <property type="term" value="F:RNA binding"/>
    <property type="evidence" value="ECO:0007669"/>
    <property type="project" value="InterPro"/>
</dbReference>
<dbReference type="GO" id="GO:0004523">
    <property type="term" value="F:RNA-DNA hybrid ribonuclease activity"/>
    <property type="evidence" value="ECO:0007669"/>
    <property type="project" value="UniProtKB-UniRule"/>
</dbReference>
<dbReference type="GO" id="GO:0043137">
    <property type="term" value="P:DNA replication, removal of RNA primer"/>
    <property type="evidence" value="ECO:0007669"/>
    <property type="project" value="TreeGrafter"/>
</dbReference>
<dbReference type="GO" id="GO:0006298">
    <property type="term" value="P:mismatch repair"/>
    <property type="evidence" value="ECO:0007669"/>
    <property type="project" value="TreeGrafter"/>
</dbReference>
<dbReference type="CDD" id="cd07182">
    <property type="entry name" value="RNase_HII_bacteria_HII_like"/>
    <property type="match status" value="1"/>
</dbReference>
<dbReference type="FunFam" id="3.30.420.10:FF:000006">
    <property type="entry name" value="Ribonuclease HII"/>
    <property type="match status" value="1"/>
</dbReference>
<dbReference type="Gene3D" id="3.30.420.10">
    <property type="entry name" value="Ribonuclease H-like superfamily/Ribonuclease H"/>
    <property type="match status" value="1"/>
</dbReference>
<dbReference type="HAMAP" id="MF_00052_B">
    <property type="entry name" value="RNase_HII_B"/>
    <property type="match status" value="1"/>
</dbReference>
<dbReference type="InterPro" id="IPR022898">
    <property type="entry name" value="RNase_HII"/>
</dbReference>
<dbReference type="InterPro" id="IPR001352">
    <property type="entry name" value="RNase_HII/HIII"/>
</dbReference>
<dbReference type="InterPro" id="IPR024567">
    <property type="entry name" value="RNase_HII/HIII_dom"/>
</dbReference>
<dbReference type="InterPro" id="IPR012337">
    <property type="entry name" value="RNaseH-like_sf"/>
</dbReference>
<dbReference type="InterPro" id="IPR036397">
    <property type="entry name" value="RNaseH_sf"/>
</dbReference>
<dbReference type="NCBIfam" id="NF000595">
    <property type="entry name" value="PRK00015.1-3"/>
    <property type="match status" value="1"/>
</dbReference>
<dbReference type="NCBIfam" id="NF000596">
    <property type="entry name" value="PRK00015.1-4"/>
    <property type="match status" value="1"/>
</dbReference>
<dbReference type="PANTHER" id="PTHR10954">
    <property type="entry name" value="RIBONUCLEASE H2 SUBUNIT A"/>
    <property type="match status" value="1"/>
</dbReference>
<dbReference type="PANTHER" id="PTHR10954:SF18">
    <property type="entry name" value="RIBONUCLEASE HII"/>
    <property type="match status" value="1"/>
</dbReference>
<dbReference type="Pfam" id="PF01351">
    <property type="entry name" value="RNase_HII"/>
    <property type="match status" value="1"/>
</dbReference>
<dbReference type="SUPFAM" id="SSF53098">
    <property type="entry name" value="Ribonuclease H-like"/>
    <property type="match status" value="1"/>
</dbReference>
<dbReference type="PROSITE" id="PS51975">
    <property type="entry name" value="RNASE_H_2"/>
    <property type="match status" value="1"/>
</dbReference>
<keyword id="KW-0963">Cytoplasm</keyword>
<keyword id="KW-0255">Endonuclease</keyword>
<keyword id="KW-0378">Hydrolase</keyword>
<keyword id="KW-0464">Manganese</keyword>
<keyword id="KW-0479">Metal-binding</keyword>
<keyword id="KW-0540">Nuclease</keyword>
<sequence>MKKEDPNLSLFSFLDEDIICGVDEAGRGPLAGPVFAAAVILDPMRPIDGLRDSKKLTEVKRDALAIEIKQYALSWSIAQCSEEEIDSLNILQATMLAMRRAIEGLHVVPTLALIDGNRCPVTSVRSEAIIKGDDKVQAISAASILAKTARDHALGLLHIQYPHYAFDQHKGYPTALHLERLREHGVSPVHRKSYAPVRALLGGVTPANKV</sequence>
<evidence type="ECO:0000255" key="1">
    <source>
        <dbReference type="HAMAP-Rule" id="MF_00052"/>
    </source>
</evidence>
<evidence type="ECO:0000255" key="2">
    <source>
        <dbReference type="PROSITE-ProRule" id="PRU01319"/>
    </source>
</evidence>
<gene>
    <name evidence="1" type="primary">rnhB</name>
    <name type="ordered locus">mma_2044</name>
</gene>
<protein>
    <recommendedName>
        <fullName evidence="1">Ribonuclease HII</fullName>
        <shortName evidence="1">RNase HII</shortName>
        <ecNumber evidence="1">3.1.26.4</ecNumber>
    </recommendedName>
</protein>
<feature type="chain" id="PRO_1000031151" description="Ribonuclease HII">
    <location>
        <begin position="1"/>
        <end position="210"/>
    </location>
</feature>
<feature type="domain" description="RNase H type-2" evidence="2">
    <location>
        <begin position="17"/>
        <end position="206"/>
    </location>
</feature>
<feature type="binding site" evidence="1">
    <location>
        <position position="23"/>
    </location>
    <ligand>
        <name>a divalent metal cation</name>
        <dbReference type="ChEBI" id="CHEBI:60240"/>
    </ligand>
</feature>
<feature type="binding site" evidence="1">
    <location>
        <position position="24"/>
    </location>
    <ligand>
        <name>a divalent metal cation</name>
        <dbReference type="ChEBI" id="CHEBI:60240"/>
    </ligand>
</feature>
<feature type="binding site" evidence="1">
    <location>
        <position position="115"/>
    </location>
    <ligand>
        <name>a divalent metal cation</name>
        <dbReference type="ChEBI" id="CHEBI:60240"/>
    </ligand>
</feature>
<reference key="1">
    <citation type="journal article" date="2007" name="PLoS Genet.">
        <title>Genome analysis of Minibacterium massiliensis highlights the convergent evolution of water-living bacteria.</title>
        <authorList>
            <person name="Audic S."/>
            <person name="Robert C."/>
            <person name="Campagna B."/>
            <person name="Parinello H."/>
            <person name="Claverie J.-M."/>
            <person name="Raoult D."/>
            <person name="Drancourt M."/>
        </authorList>
    </citation>
    <scope>NUCLEOTIDE SEQUENCE [LARGE SCALE GENOMIC DNA]</scope>
    <source>
        <strain>Marseille</strain>
    </source>
</reference>
<comment type="function">
    <text evidence="1">Endonuclease that specifically degrades the RNA of RNA-DNA hybrids.</text>
</comment>
<comment type="catalytic activity">
    <reaction evidence="1">
        <text>Endonucleolytic cleavage to 5'-phosphomonoester.</text>
        <dbReference type="EC" id="3.1.26.4"/>
    </reaction>
</comment>
<comment type="cofactor">
    <cofactor evidence="1">
        <name>Mn(2+)</name>
        <dbReference type="ChEBI" id="CHEBI:29035"/>
    </cofactor>
    <cofactor evidence="1">
        <name>Mg(2+)</name>
        <dbReference type="ChEBI" id="CHEBI:18420"/>
    </cofactor>
    <text evidence="1">Manganese or magnesium. Binds 1 divalent metal ion per monomer in the absence of substrate. May bind a second metal ion after substrate binding.</text>
</comment>
<comment type="subcellular location">
    <subcellularLocation>
        <location evidence="1">Cytoplasm</location>
    </subcellularLocation>
</comment>
<comment type="similarity">
    <text evidence="1">Belongs to the RNase HII family.</text>
</comment>